<keyword id="KW-0067">ATP-binding</keyword>
<keyword id="KW-0963">Cytoplasm</keyword>
<keyword id="KW-0436">Ligase</keyword>
<keyword id="KW-0547">Nucleotide-binding</keyword>
<keyword id="KW-0566">Pantothenate biosynthesis</keyword>
<dbReference type="EC" id="6.3.2.1" evidence="1"/>
<dbReference type="EMBL" id="AE008923">
    <property type="protein sequence ID" value="AAM36649.1"/>
    <property type="molecule type" value="Genomic_DNA"/>
</dbReference>
<dbReference type="RefSeq" id="WP_003481962.1">
    <property type="nucleotide sequence ID" value="NC_003919.1"/>
</dbReference>
<dbReference type="SMR" id="Q8PLL0"/>
<dbReference type="KEGG" id="xac:XAC1786"/>
<dbReference type="eggNOG" id="COG0414">
    <property type="taxonomic scope" value="Bacteria"/>
</dbReference>
<dbReference type="HOGENOM" id="CLU_047148_0_0_6"/>
<dbReference type="UniPathway" id="UPA00028">
    <property type="reaction ID" value="UER00005"/>
</dbReference>
<dbReference type="Proteomes" id="UP000000576">
    <property type="component" value="Chromosome"/>
</dbReference>
<dbReference type="GO" id="GO:0005829">
    <property type="term" value="C:cytosol"/>
    <property type="evidence" value="ECO:0007669"/>
    <property type="project" value="TreeGrafter"/>
</dbReference>
<dbReference type="GO" id="GO:0005524">
    <property type="term" value="F:ATP binding"/>
    <property type="evidence" value="ECO:0007669"/>
    <property type="project" value="UniProtKB-KW"/>
</dbReference>
<dbReference type="GO" id="GO:0004592">
    <property type="term" value="F:pantoate-beta-alanine ligase activity"/>
    <property type="evidence" value="ECO:0007669"/>
    <property type="project" value="UniProtKB-UniRule"/>
</dbReference>
<dbReference type="GO" id="GO:0015940">
    <property type="term" value="P:pantothenate biosynthetic process"/>
    <property type="evidence" value="ECO:0007669"/>
    <property type="project" value="UniProtKB-UniRule"/>
</dbReference>
<dbReference type="CDD" id="cd00560">
    <property type="entry name" value="PanC"/>
    <property type="match status" value="1"/>
</dbReference>
<dbReference type="FunFam" id="3.40.50.620:FF:000114">
    <property type="entry name" value="Pantothenate synthetase"/>
    <property type="match status" value="1"/>
</dbReference>
<dbReference type="Gene3D" id="3.40.50.620">
    <property type="entry name" value="HUPs"/>
    <property type="match status" value="1"/>
</dbReference>
<dbReference type="Gene3D" id="3.30.1300.10">
    <property type="entry name" value="Pantoate-beta-alanine ligase, C-terminal domain"/>
    <property type="match status" value="1"/>
</dbReference>
<dbReference type="HAMAP" id="MF_00158">
    <property type="entry name" value="PanC"/>
    <property type="match status" value="1"/>
</dbReference>
<dbReference type="InterPro" id="IPR003721">
    <property type="entry name" value="Pantoate_ligase"/>
</dbReference>
<dbReference type="InterPro" id="IPR042176">
    <property type="entry name" value="Pantoate_ligase_C"/>
</dbReference>
<dbReference type="InterPro" id="IPR014729">
    <property type="entry name" value="Rossmann-like_a/b/a_fold"/>
</dbReference>
<dbReference type="NCBIfam" id="TIGR00018">
    <property type="entry name" value="panC"/>
    <property type="match status" value="1"/>
</dbReference>
<dbReference type="PANTHER" id="PTHR21299">
    <property type="entry name" value="CYTIDYLATE KINASE/PANTOATE-BETA-ALANINE LIGASE"/>
    <property type="match status" value="1"/>
</dbReference>
<dbReference type="PANTHER" id="PTHR21299:SF1">
    <property type="entry name" value="PANTOATE--BETA-ALANINE LIGASE"/>
    <property type="match status" value="1"/>
</dbReference>
<dbReference type="Pfam" id="PF02569">
    <property type="entry name" value="Pantoate_ligase"/>
    <property type="match status" value="1"/>
</dbReference>
<dbReference type="SUPFAM" id="SSF52374">
    <property type="entry name" value="Nucleotidylyl transferase"/>
    <property type="match status" value="1"/>
</dbReference>
<sequence>MIQTLTDLSALRALVNGWKREGLRVALVPTMGNLHAGHYSLVMLARQYADRVVSSVFVNPTQFGPNEDFARYPRTPEADLRGLEDAGCDALWLPDVDTMYPLGTALATPIHAPGVSDVLEGECRPGHFDGVCTVVARLFNQVQPDVAAFGKKDYQQLAVIRQMVADLAFPIEILGGSIVREADGLAMSSRNQYLSAEDRPISSTIRKVLLQMRDSYAAGTPRAQVEDAASHTLEQAGFRVDYAVVRLPDLSEPGDSHAGARVALIAARLGNTRLIDNLEF</sequence>
<feature type="chain" id="PRO_0000128289" description="Pantothenate synthetase">
    <location>
        <begin position="1"/>
        <end position="280"/>
    </location>
</feature>
<feature type="active site" description="Proton donor" evidence="1">
    <location>
        <position position="38"/>
    </location>
</feature>
<feature type="binding site" evidence="1">
    <location>
        <begin position="31"/>
        <end position="38"/>
    </location>
    <ligand>
        <name>ATP</name>
        <dbReference type="ChEBI" id="CHEBI:30616"/>
    </ligand>
</feature>
<feature type="binding site" evidence="1">
    <location>
        <position position="62"/>
    </location>
    <ligand>
        <name>(R)-pantoate</name>
        <dbReference type="ChEBI" id="CHEBI:15980"/>
    </ligand>
</feature>
<feature type="binding site" evidence="1">
    <location>
        <position position="62"/>
    </location>
    <ligand>
        <name>beta-alanine</name>
        <dbReference type="ChEBI" id="CHEBI:57966"/>
    </ligand>
</feature>
<feature type="binding site" evidence="1">
    <location>
        <begin position="150"/>
        <end position="153"/>
    </location>
    <ligand>
        <name>ATP</name>
        <dbReference type="ChEBI" id="CHEBI:30616"/>
    </ligand>
</feature>
<feature type="binding site" evidence="1">
    <location>
        <position position="156"/>
    </location>
    <ligand>
        <name>(R)-pantoate</name>
        <dbReference type="ChEBI" id="CHEBI:15980"/>
    </ligand>
</feature>
<feature type="binding site" evidence="1">
    <location>
        <position position="179"/>
    </location>
    <ligand>
        <name>ATP</name>
        <dbReference type="ChEBI" id="CHEBI:30616"/>
    </ligand>
</feature>
<feature type="binding site" evidence="1">
    <location>
        <begin position="187"/>
        <end position="190"/>
    </location>
    <ligand>
        <name>ATP</name>
        <dbReference type="ChEBI" id="CHEBI:30616"/>
    </ligand>
</feature>
<accession>Q8PLL0</accession>
<comment type="function">
    <text evidence="1">Catalyzes the condensation of pantoate with beta-alanine in an ATP-dependent reaction via a pantoyl-adenylate intermediate.</text>
</comment>
<comment type="catalytic activity">
    <reaction evidence="1">
        <text>(R)-pantoate + beta-alanine + ATP = (R)-pantothenate + AMP + diphosphate + H(+)</text>
        <dbReference type="Rhea" id="RHEA:10912"/>
        <dbReference type="ChEBI" id="CHEBI:15378"/>
        <dbReference type="ChEBI" id="CHEBI:15980"/>
        <dbReference type="ChEBI" id="CHEBI:29032"/>
        <dbReference type="ChEBI" id="CHEBI:30616"/>
        <dbReference type="ChEBI" id="CHEBI:33019"/>
        <dbReference type="ChEBI" id="CHEBI:57966"/>
        <dbReference type="ChEBI" id="CHEBI:456215"/>
        <dbReference type="EC" id="6.3.2.1"/>
    </reaction>
</comment>
<comment type="pathway">
    <text evidence="1">Cofactor biosynthesis; (R)-pantothenate biosynthesis; (R)-pantothenate from (R)-pantoate and beta-alanine: step 1/1.</text>
</comment>
<comment type="subunit">
    <text evidence="1">Homodimer.</text>
</comment>
<comment type="subcellular location">
    <subcellularLocation>
        <location evidence="1">Cytoplasm</location>
    </subcellularLocation>
</comment>
<comment type="miscellaneous">
    <text evidence="1">The reaction proceeds by a bi uni uni bi ping pong mechanism.</text>
</comment>
<comment type="similarity">
    <text evidence="1">Belongs to the pantothenate synthetase family.</text>
</comment>
<name>PANC_XANAC</name>
<protein>
    <recommendedName>
        <fullName evidence="1">Pantothenate synthetase</fullName>
        <shortName evidence="1">PS</shortName>
        <ecNumber evidence="1">6.3.2.1</ecNumber>
    </recommendedName>
    <alternativeName>
        <fullName evidence="1">Pantoate--beta-alanine ligase</fullName>
    </alternativeName>
    <alternativeName>
        <fullName evidence="1">Pantoate-activating enzyme</fullName>
    </alternativeName>
</protein>
<organism>
    <name type="scientific">Xanthomonas axonopodis pv. citri (strain 306)</name>
    <dbReference type="NCBI Taxonomy" id="190486"/>
    <lineage>
        <taxon>Bacteria</taxon>
        <taxon>Pseudomonadati</taxon>
        <taxon>Pseudomonadota</taxon>
        <taxon>Gammaproteobacteria</taxon>
        <taxon>Lysobacterales</taxon>
        <taxon>Lysobacteraceae</taxon>
        <taxon>Xanthomonas</taxon>
    </lineage>
</organism>
<reference key="1">
    <citation type="journal article" date="2002" name="Nature">
        <title>Comparison of the genomes of two Xanthomonas pathogens with differing host specificities.</title>
        <authorList>
            <person name="da Silva A.C.R."/>
            <person name="Ferro J.A."/>
            <person name="Reinach F.C."/>
            <person name="Farah C.S."/>
            <person name="Furlan L.R."/>
            <person name="Quaggio R.B."/>
            <person name="Monteiro-Vitorello C.B."/>
            <person name="Van Sluys M.A."/>
            <person name="Almeida N.F. Jr."/>
            <person name="Alves L.M.C."/>
            <person name="do Amaral A.M."/>
            <person name="Bertolini M.C."/>
            <person name="Camargo L.E.A."/>
            <person name="Camarotte G."/>
            <person name="Cannavan F."/>
            <person name="Cardozo J."/>
            <person name="Chambergo F."/>
            <person name="Ciapina L.P."/>
            <person name="Cicarelli R.M.B."/>
            <person name="Coutinho L.L."/>
            <person name="Cursino-Santos J.R."/>
            <person name="El-Dorry H."/>
            <person name="Faria J.B."/>
            <person name="Ferreira A.J.S."/>
            <person name="Ferreira R.C.C."/>
            <person name="Ferro M.I.T."/>
            <person name="Formighieri E.F."/>
            <person name="Franco M.C."/>
            <person name="Greggio C.C."/>
            <person name="Gruber A."/>
            <person name="Katsuyama A.M."/>
            <person name="Kishi L.T."/>
            <person name="Leite R.P."/>
            <person name="Lemos E.G.M."/>
            <person name="Lemos M.V.F."/>
            <person name="Locali E.C."/>
            <person name="Machado M.A."/>
            <person name="Madeira A.M.B.N."/>
            <person name="Martinez-Rossi N.M."/>
            <person name="Martins E.C."/>
            <person name="Meidanis J."/>
            <person name="Menck C.F.M."/>
            <person name="Miyaki C.Y."/>
            <person name="Moon D.H."/>
            <person name="Moreira L.M."/>
            <person name="Novo M.T.M."/>
            <person name="Okura V.K."/>
            <person name="Oliveira M.C."/>
            <person name="Oliveira V.R."/>
            <person name="Pereira H.A."/>
            <person name="Rossi A."/>
            <person name="Sena J.A.D."/>
            <person name="Silva C."/>
            <person name="de Souza R.F."/>
            <person name="Spinola L.A.F."/>
            <person name="Takita M.A."/>
            <person name="Tamura R.E."/>
            <person name="Teixeira E.C."/>
            <person name="Tezza R.I.D."/>
            <person name="Trindade dos Santos M."/>
            <person name="Truffi D."/>
            <person name="Tsai S.M."/>
            <person name="White F.F."/>
            <person name="Setubal J.C."/>
            <person name="Kitajima J.P."/>
        </authorList>
    </citation>
    <scope>NUCLEOTIDE SEQUENCE [LARGE SCALE GENOMIC DNA]</scope>
    <source>
        <strain>306</strain>
    </source>
</reference>
<proteinExistence type="inferred from homology"/>
<gene>
    <name evidence="1" type="primary">panC</name>
    <name type="ordered locus">XAC1786</name>
</gene>
<evidence type="ECO:0000255" key="1">
    <source>
        <dbReference type="HAMAP-Rule" id="MF_00158"/>
    </source>
</evidence>